<evidence type="ECO:0000255" key="1">
    <source>
        <dbReference type="HAMAP-Rule" id="MF_00817"/>
    </source>
</evidence>
<sequence length="276" mass="30743">MHPAAEHSPLGKSSEYIATYTPSLLFPIPRLAKWAELGVSGDALPWQGVDYWNCFELSWLLPSGKPVVAIGEFAIPCDSPNIIESKSFKLYLNSLNQTKFESVAQLQACLAKDLSAAAGKVVAVKVSTLADVEAQGVTTLPGQCIDALDVTIDNYEQPQPELLRCSTERVVEETVHSHLLKSNCPVTGQPDWGSVVVEYKGRALDHASLLTYLISFRQHADFHEQCVERIYLDLKKLLQPEYLTVYARYVRRGGLDINPYRSTRAISPENLRLVRQ</sequence>
<protein>
    <recommendedName>
        <fullName evidence="1">NADPH-dependent 7-cyano-7-deazaguanine reductase</fullName>
        <ecNumber evidence="1">1.7.1.13</ecNumber>
    </recommendedName>
    <alternativeName>
        <fullName evidence="1">7-cyano-7-carbaguanine reductase</fullName>
    </alternativeName>
    <alternativeName>
        <fullName evidence="1">NADPH-dependent nitrile oxidoreductase</fullName>
    </alternativeName>
    <alternativeName>
        <fullName evidence="1">PreQ(0) reductase</fullName>
    </alternativeName>
</protein>
<keyword id="KW-0963">Cytoplasm</keyword>
<keyword id="KW-0521">NADP</keyword>
<keyword id="KW-0560">Oxidoreductase</keyword>
<keyword id="KW-0671">Queuosine biosynthesis</keyword>
<accession>Q1I7F9</accession>
<comment type="function">
    <text evidence="1">Catalyzes the NADPH-dependent reduction of 7-cyano-7-deazaguanine (preQ0) to 7-aminomethyl-7-deazaguanine (preQ1).</text>
</comment>
<comment type="catalytic activity">
    <reaction evidence="1">
        <text>7-aminomethyl-7-carbaguanine + 2 NADP(+) = 7-cyano-7-deazaguanine + 2 NADPH + 3 H(+)</text>
        <dbReference type="Rhea" id="RHEA:13409"/>
        <dbReference type="ChEBI" id="CHEBI:15378"/>
        <dbReference type="ChEBI" id="CHEBI:45075"/>
        <dbReference type="ChEBI" id="CHEBI:57783"/>
        <dbReference type="ChEBI" id="CHEBI:58349"/>
        <dbReference type="ChEBI" id="CHEBI:58703"/>
        <dbReference type="EC" id="1.7.1.13"/>
    </reaction>
</comment>
<comment type="pathway">
    <text evidence="1">tRNA modification; tRNA-queuosine biosynthesis.</text>
</comment>
<comment type="subunit">
    <text evidence="1">Homodimer.</text>
</comment>
<comment type="subcellular location">
    <subcellularLocation>
        <location evidence="1">Cytoplasm</location>
    </subcellularLocation>
</comment>
<comment type="similarity">
    <text evidence="1">Belongs to the GTP cyclohydrolase I family. QueF type 2 subfamily.</text>
</comment>
<reference key="1">
    <citation type="journal article" date="2006" name="Nat. Biotechnol.">
        <title>Complete genome sequence of the entomopathogenic and metabolically versatile soil bacterium Pseudomonas entomophila.</title>
        <authorList>
            <person name="Vodovar N."/>
            <person name="Vallenet D."/>
            <person name="Cruveiller S."/>
            <person name="Rouy Z."/>
            <person name="Barbe V."/>
            <person name="Acosta C."/>
            <person name="Cattolico L."/>
            <person name="Jubin C."/>
            <person name="Lajus A."/>
            <person name="Segurens B."/>
            <person name="Vacherie B."/>
            <person name="Wincker P."/>
            <person name="Weissenbach J."/>
            <person name="Lemaitre B."/>
            <person name="Medigue C."/>
            <person name="Boccard F."/>
        </authorList>
    </citation>
    <scope>NUCLEOTIDE SEQUENCE [LARGE SCALE GENOMIC DNA]</scope>
    <source>
        <strain>L48</strain>
    </source>
</reference>
<dbReference type="EC" id="1.7.1.13" evidence="1"/>
<dbReference type="EMBL" id="CT573326">
    <property type="protein sequence ID" value="CAK16423.1"/>
    <property type="molecule type" value="Genomic_DNA"/>
</dbReference>
<dbReference type="RefSeq" id="WP_011534800.1">
    <property type="nucleotide sequence ID" value="NC_008027.1"/>
</dbReference>
<dbReference type="SMR" id="Q1I7F9"/>
<dbReference type="STRING" id="384676.PSEEN3702"/>
<dbReference type="GeneID" id="32806748"/>
<dbReference type="KEGG" id="pen:PSEEN3702"/>
<dbReference type="eggNOG" id="COG0780">
    <property type="taxonomic scope" value="Bacteria"/>
</dbReference>
<dbReference type="eggNOG" id="COG2904">
    <property type="taxonomic scope" value="Bacteria"/>
</dbReference>
<dbReference type="HOGENOM" id="CLU_054738_0_0_6"/>
<dbReference type="OrthoDB" id="9789995at2"/>
<dbReference type="UniPathway" id="UPA00392"/>
<dbReference type="Proteomes" id="UP000000658">
    <property type="component" value="Chromosome"/>
</dbReference>
<dbReference type="GO" id="GO:0005737">
    <property type="term" value="C:cytoplasm"/>
    <property type="evidence" value="ECO:0007669"/>
    <property type="project" value="UniProtKB-SubCell"/>
</dbReference>
<dbReference type="GO" id="GO:0033739">
    <property type="term" value="F:preQ1 synthase activity"/>
    <property type="evidence" value="ECO:0007669"/>
    <property type="project" value="UniProtKB-UniRule"/>
</dbReference>
<dbReference type="GO" id="GO:0008616">
    <property type="term" value="P:queuosine biosynthetic process"/>
    <property type="evidence" value="ECO:0007669"/>
    <property type="project" value="UniProtKB-UniRule"/>
</dbReference>
<dbReference type="GO" id="GO:0006400">
    <property type="term" value="P:tRNA modification"/>
    <property type="evidence" value="ECO:0007669"/>
    <property type="project" value="UniProtKB-UniRule"/>
</dbReference>
<dbReference type="Gene3D" id="3.30.1130.10">
    <property type="match status" value="2"/>
</dbReference>
<dbReference type="HAMAP" id="MF_00817">
    <property type="entry name" value="QueF_type2"/>
    <property type="match status" value="1"/>
</dbReference>
<dbReference type="InterPro" id="IPR043133">
    <property type="entry name" value="GTP-CH-I_C/QueF"/>
</dbReference>
<dbReference type="InterPro" id="IPR050084">
    <property type="entry name" value="NADPH_dep_7-cyano-7-deazaG_red"/>
</dbReference>
<dbReference type="InterPro" id="IPR029500">
    <property type="entry name" value="QueF"/>
</dbReference>
<dbReference type="InterPro" id="IPR029139">
    <property type="entry name" value="QueF_N"/>
</dbReference>
<dbReference type="InterPro" id="IPR016428">
    <property type="entry name" value="QueF_type2"/>
</dbReference>
<dbReference type="NCBIfam" id="TIGR03138">
    <property type="entry name" value="QueF"/>
    <property type="match status" value="1"/>
</dbReference>
<dbReference type="PANTHER" id="PTHR34354">
    <property type="entry name" value="NADPH-DEPENDENT 7-CYANO-7-DEAZAGUANINE REDUCTASE"/>
    <property type="match status" value="1"/>
</dbReference>
<dbReference type="PANTHER" id="PTHR34354:SF1">
    <property type="entry name" value="NADPH-DEPENDENT 7-CYANO-7-DEAZAGUANINE REDUCTASE"/>
    <property type="match status" value="1"/>
</dbReference>
<dbReference type="Pfam" id="PF14489">
    <property type="entry name" value="QueF"/>
    <property type="match status" value="1"/>
</dbReference>
<dbReference type="Pfam" id="PF14819">
    <property type="entry name" value="QueF_N"/>
    <property type="match status" value="1"/>
</dbReference>
<dbReference type="PIRSF" id="PIRSF004750">
    <property type="entry name" value="Nitrile_oxidored_YqcD_prd"/>
    <property type="match status" value="1"/>
</dbReference>
<dbReference type="SUPFAM" id="SSF55620">
    <property type="entry name" value="Tetrahydrobiopterin biosynthesis enzymes-like"/>
    <property type="match status" value="1"/>
</dbReference>
<feature type="chain" id="PRO_1000062352" description="NADPH-dependent 7-cyano-7-deazaguanine reductase">
    <location>
        <begin position="1"/>
        <end position="276"/>
    </location>
</feature>
<feature type="active site" description="Thioimide intermediate" evidence="1">
    <location>
        <position position="184"/>
    </location>
</feature>
<feature type="active site" description="Proton donor" evidence="1">
    <location>
        <position position="191"/>
    </location>
</feature>
<feature type="binding site" evidence="1">
    <location>
        <begin position="83"/>
        <end position="85"/>
    </location>
    <ligand>
        <name>substrate</name>
    </ligand>
</feature>
<feature type="binding site" evidence="1">
    <location>
        <begin position="85"/>
        <end position="86"/>
    </location>
    <ligand>
        <name>NADPH</name>
        <dbReference type="ChEBI" id="CHEBI:57783"/>
    </ligand>
</feature>
<feature type="binding site" evidence="1">
    <location>
        <begin position="223"/>
        <end position="224"/>
    </location>
    <ligand>
        <name>substrate</name>
    </ligand>
</feature>
<feature type="binding site" evidence="1">
    <location>
        <begin position="252"/>
        <end position="253"/>
    </location>
    <ligand>
        <name>NADPH</name>
        <dbReference type="ChEBI" id="CHEBI:57783"/>
    </ligand>
</feature>
<gene>
    <name evidence="1" type="primary">queF</name>
    <name type="ordered locus">PSEEN3702</name>
</gene>
<name>QUEF_PSEE4</name>
<organism>
    <name type="scientific">Pseudomonas entomophila (strain L48)</name>
    <dbReference type="NCBI Taxonomy" id="384676"/>
    <lineage>
        <taxon>Bacteria</taxon>
        <taxon>Pseudomonadati</taxon>
        <taxon>Pseudomonadota</taxon>
        <taxon>Gammaproteobacteria</taxon>
        <taxon>Pseudomonadales</taxon>
        <taxon>Pseudomonadaceae</taxon>
        <taxon>Pseudomonas</taxon>
    </lineage>
</organism>
<proteinExistence type="inferred from homology"/>